<feature type="signal peptide" evidence="1">
    <location>
        <begin position="1"/>
        <end position="21"/>
    </location>
</feature>
<feature type="chain" id="PRO_0000022486" description="Trans-Golgi network integral membrane protein 2">
    <location>
        <begin position="22"/>
        <end position="437"/>
    </location>
</feature>
<feature type="topological domain" description="Extracellular" evidence="1">
    <location>
        <begin position="22"/>
        <end position="381"/>
    </location>
</feature>
<feature type="transmembrane region" description="Helical" evidence="1">
    <location>
        <begin position="382"/>
        <end position="402"/>
    </location>
</feature>
<feature type="topological domain" description="Cytoplasmic" evidence="1">
    <location>
        <begin position="403"/>
        <end position="437"/>
    </location>
</feature>
<feature type="repeat" description="1">
    <location>
        <begin position="54"/>
        <end position="67"/>
    </location>
</feature>
<feature type="repeat" description="2">
    <location>
        <begin position="68"/>
        <end position="81"/>
    </location>
</feature>
<feature type="repeat" description="3">
    <location>
        <begin position="82"/>
        <end position="95"/>
    </location>
</feature>
<feature type="repeat" description="4">
    <location>
        <begin position="96"/>
        <end position="109"/>
    </location>
</feature>
<feature type="repeat" description="5">
    <location>
        <begin position="110"/>
        <end position="123"/>
    </location>
</feature>
<feature type="repeat" description="6">
    <location>
        <begin position="124"/>
        <end position="137"/>
    </location>
</feature>
<feature type="repeat" description="7">
    <location>
        <begin position="138"/>
        <end position="151"/>
    </location>
</feature>
<feature type="repeat" description="8">
    <location>
        <begin position="152"/>
        <end position="165"/>
    </location>
</feature>
<feature type="repeat" description="9">
    <location>
        <begin position="166"/>
        <end position="179"/>
    </location>
</feature>
<feature type="repeat" description="10">
    <location>
        <begin position="180"/>
        <end position="193"/>
    </location>
</feature>
<feature type="repeat" description="11">
    <location>
        <begin position="194"/>
        <end position="207"/>
    </location>
</feature>
<feature type="repeat" description="12">
    <location>
        <begin position="208"/>
        <end position="221"/>
    </location>
</feature>
<feature type="repeat" description="13">
    <location>
        <begin position="222"/>
        <end position="234"/>
    </location>
</feature>
<feature type="repeat" description="14">
    <location>
        <begin position="235"/>
        <end position="249"/>
    </location>
</feature>
<feature type="region of interest" description="Disordered" evidence="2">
    <location>
        <begin position="27"/>
        <end position="377"/>
    </location>
</feature>
<feature type="region of interest" description="14 X 14 AA tandem repeats">
    <location>
        <begin position="54"/>
        <end position="249"/>
    </location>
</feature>
<feature type="short sequence motif" description="Endocytosis signal; in isoform TGN51">
    <location>
        <begin position="395"/>
        <end position="398"/>
    </location>
</feature>
<feature type="short sequence motif" description="Endocytosis signal; in isoform TGN51">
    <location>
        <begin position="418"/>
        <end position="421"/>
    </location>
</feature>
<feature type="short sequence motif" description="Endocytosis signal; in isoform TGN46 and isoform TGN48">
    <location>
        <begin position="430"/>
        <end position="433"/>
    </location>
</feature>
<feature type="compositionally biased region" description="Polar residues" evidence="2">
    <location>
        <begin position="38"/>
        <end position="55"/>
    </location>
</feature>
<feature type="compositionally biased region" description="Polar residues" evidence="2">
    <location>
        <begin position="63"/>
        <end position="83"/>
    </location>
</feature>
<feature type="compositionally biased region" description="Low complexity" evidence="2">
    <location>
        <begin position="105"/>
        <end position="114"/>
    </location>
</feature>
<feature type="compositionally biased region" description="Polar residues" evidence="2">
    <location>
        <begin position="166"/>
        <end position="177"/>
    </location>
</feature>
<feature type="compositionally biased region" description="Basic and acidic residues" evidence="2">
    <location>
        <begin position="197"/>
        <end position="221"/>
    </location>
</feature>
<feature type="compositionally biased region" description="Basic and acidic residues" evidence="2">
    <location>
        <begin position="239"/>
        <end position="249"/>
    </location>
</feature>
<feature type="compositionally biased region" description="Basic and acidic residues" evidence="2">
    <location>
        <begin position="310"/>
        <end position="324"/>
    </location>
</feature>
<feature type="compositionally biased region" description="Basic and acidic residues" evidence="2">
    <location>
        <begin position="337"/>
        <end position="346"/>
    </location>
</feature>
<feature type="compositionally biased region" description="Basic and acidic residues" evidence="2">
    <location>
        <begin position="353"/>
        <end position="370"/>
    </location>
</feature>
<feature type="modified residue" description="Phosphoserine; by FAM20C" evidence="4 13 14 15 16">
    <location>
        <position position="71"/>
    </location>
</feature>
<feature type="modified residue" description="Phosphoserine; by FAM20C" evidence="4">
    <location>
        <position position="221"/>
    </location>
</feature>
<feature type="modified residue" description="Phosphoserine; by FAM20C" evidence="4 15">
    <location>
        <position position="298"/>
    </location>
</feature>
<feature type="modified residue" description="Phosphothreonine; by FAM20C" evidence="4">
    <location>
        <position position="302"/>
    </location>
</feature>
<feature type="modified residue" description="Phosphoserine; by FAM20C" evidence="4 16">
    <location>
        <position position="351"/>
    </location>
</feature>
<feature type="glycosylation site" description="N-linked (GlcNAc...) asparagine" evidence="1">
    <location>
        <position position="39"/>
    </location>
</feature>
<feature type="glycosylation site" description="N-linked (GlcNAc...) asparagine" evidence="1">
    <location>
        <position position="82"/>
    </location>
</feature>
<feature type="glycosylation site" description="N-linked (GlcNAc...) asparagine" evidence="1">
    <location>
        <position position="96"/>
    </location>
</feature>
<feature type="glycosylation site" description="N-linked (GlcNAc...) asparagine" evidence="1">
    <location>
        <position position="152"/>
    </location>
</feature>
<feature type="glycosylation site" description="N-linked (GlcNAc...) asparagine" evidence="1">
    <location>
        <position position="180"/>
    </location>
</feature>
<feature type="glycosylation site" description="N-linked (GlcNAc...) asparagine" evidence="1">
    <location>
        <position position="208"/>
    </location>
</feature>
<feature type="glycosylation site" description="N-linked (GlcNAc...) asparagine" evidence="1">
    <location>
        <position position="222"/>
    </location>
</feature>
<feature type="glycosylation site" description="N-linked (GlcNAc...) asparagine" evidence="1">
    <location>
        <position position="373"/>
    </location>
</feature>
<feature type="glycosylation site" description="N-linked (GlcNAc...) asparagine" evidence="1">
    <location>
        <position position="377"/>
    </location>
</feature>
<feature type="splice variant" id="VSP_060318" description="In isoform 6.">
    <location>
        <begin position="71"/>
        <end position="168"/>
    </location>
</feature>
<feature type="splice variant" id="VSP_060319" description="In isoform 4.">
    <original>KVVPEQPSRKDHSKPISNPSDNKELPKADTNQLADKGKLSPHAFKTESGEETDLISPPQ</original>
    <variation>K</variation>
    <location>
        <begin position="251"/>
        <end position="309"/>
    </location>
</feature>
<feature type="splice variant" id="VSP_060320" description="In isoform 6.">
    <location>
        <begin position="252"/>
        <end position="309"/>
    </location>
</feature>
<feature type="splice variant" id="VSP_060321" description="In isoform 5.">
    <original>S</original>
    <variation>VRKEEPGPWEG</variation>
    <location>
        <position position="437"/>
    </location>
</feature>
<feature type="splice variant" id="VSP_060322" description="In isoform 7.">
    <original>S</original>
    <variation>YVLILNVFPAPPKRSFFP</variation>
    <location>
        <position position="437"/>
    </location>
</feature>
<feature type="splice variant" id="VSP_060323" description="In isoform TGN48." evidence="9">
    <original>S</original>
    <variation>IFSPPSPNRMVYSSGKR</variation>
    <location>
        <position position="437"/>
    </location>
</feature>
<feature type="sequence variant" id="VAR_034724" description="In dbSNP:rs1128140." evidence="6">
    <original>L</original>
    <variation>V</variation>
    <location>
        <position position="10"/>
    </location>
</feature>
<feature type="sequence variant" id="VAR_034725" description="In dbSNP:rs1044962." evidence="6">
    <original>A</original>
    <variation>G</variation>
    <location>
        <position position="86"/>
    </location>
</feature>
<feature type="sequence variant" id="VAR_034726" description="In dbSNP:rs1044963." evidence="6">
    <original>Q</original>
    <variation>L</variation>
    <location>
        <position position="91"/>
    </location>
</feature>
<feature type="sequence variant" id="VAR_034727" description="In dbSNP:rs1044964." evidence="6">
    <original>K</original>
    <variation>Q</variation>
    <location>
        <position position="103"/>
    </location>
</feature>
<feature type="sequence variant" id="VAR_034728" description="In dbSNP:rs1573051515." evidence="6">
    <original>Q</original>
    <variation>P</variation>
    <location>
        <position position="105"/>
    </location>
</feature>
<feature type="sequence variant" id="VAR_034729" description="In dbSNP:rs4247303." evidence="3 5 7 8">
    <original>R</original>
    <variation>W</variation>
    <location>
        <position position="259"/>
    </location>
</feature>
<feature type="sequence variant" id="VAR_034730" description="In dbSNP:rs1044969." evidence="6">
    <original>E</original>
    <variation>G</variation>
    <location>
        <position position="322"/>
    </location>
</feature>
<feature type="mutagenesis site" description="Loss of relocalization to the trans-Golgi." evidence="6">
    <original>Y</original>
    <variation>A</variation>
    <location>
        <position position="430"/>
    </location>
</feature>
<feature type="sequence conflict" description="In Ref. 8; AAH08461." evidence="10" ref="8">
    <original>E</original>
    <variation>D</variation>
    <location>
        <position position="30"/>
    </location>
</feature>
<feature type="sequence conflict" description="In Ref. 4; BAD96549." evidence="10" ref="4">
    <original>S</original>
    <variation>G</variation>
    <location>
        <position position="71"/>
    </location>
</feature>
<feature type="sequence conflict" description="In Ref. 4; BAD96783." evidence="10" ref="4">
    <original>A</original>
    <variation>P</variation>
    <location>
        <position position="74"/>
    </location>
</feature>
<feature type="sequence conflict" description="In Ref. 1; AAB96906/AAB96907/AAB96908/AAC39539/AAC39541/AAC39542." evidence="10" ref="1">
    <original>A</original>
    <variation>P</variation>
    <location>
        <position position="158"/>
    </location>
</feature>
<feature type="sequence conflict" description="In Ref. 5; CAE45926." evidence="10" ref="5">
    <original>F</original>
    <variation>S</variation>
    <location>
        <position position="386"/>
    </location>
</feature>
<feature type="sequence variant" id="VAR_082887" description="In dbSNP:rs4240199." evidence="10">
    <original>P</original>
    <variation>L</variation>
    <location sequence="O43493-3">
        <position position="441"/>
    </location>
</feature>
<feature type="sequence conflict" description="In Ref. 1; AAC39541/AAB96907." ref="1">
    <original>S</original>
    <variation>F</variation>
    <location sequence="O43493-3">
        <position position="439"/>
    </location>
</feature>
<feature type="sequence conflict" description="In Ref. 1; AAB96908/AAC39542." ref="1">
    <original>F</original>
    <variation>L</variation>
    <location sequence="O43493-7">
        <position position="453"/>
    </location>
</feature>
<accession>O43493</accession>
<accession>B2R686</accession>
<accession>B8ZZ88</accession>
<accession>D6W5K3</accession>
<accession>F8W8W7</accession>
<accession>F8WBK2</accession>
<accession>J3KQ45</accession>
<accession>O15282</accession>
<accession>O43492</accession>
<accession>O43499</accession>
<accession>O43500</accession>
<accession>O43501</accession>
<accession>Q53G68</accession>
<accession>Q53GV2</accession>
<accession>Q6MZV1</accession>
<accession>Q6ZTM7</accession>
<accession>Q8N6T8</accession>
<accession>Q92760</accession>
<accession>Q96QL2</accession>
<dbReference type="EMBL" id="AF029316">
    <property type="protein sequence ID" value="AAB96906.1"/>
    <property type="molecule type" value="Genomic_DNA"/>
</dbReference>
<dbReference type="EMBL" id="AF029313">
    <property type="protein sequence ID" value="AAB96906.1"/>
    <property type="status" value="JOINED"/>
    <property type="molecule type" value="Genomic_DNA"/>
</dbReference>
<dbReference type="EMBL" id="AF029314">
    <property type="protein sequence ID" value="AAB96906.1"/>
    <property type="status" value="JOINED"/>
    <property type="molecule type" value="Genomic_DNA"/>
</dbReference>
<dbReference type="EMBL" id="AF029315">
    <property type="protein sequence ID" value="AAB96906.1"/>
    <property type="status" value="JOINED"/>
    <property type="molecule type" value="Genomic_DNA"/>
</dbReference>
<dbReference type="EMBL" id="AF029316">
    <property type="protein sequence ID" value="AAB96907.1"/>
    <property type="molecule type" value="Genomic_DNA"/>
</dbReference>
<dbReference type="EMBL" id="AF029313">
    <property type="protein sequence ID" value="AAB96907.1"/>
    <property type="status" value="JOINED"/>
    <property type="molecule type" value="Genomic_DNA"/>
</dbReference>
<dbReference type="EMBL" id="AF029314">
    <property type="protein sequence ID" value="AAB96907.1"/>
    <property type="status" value="JOINED"/>
    <property type="molecule type" value="Genomic_DNA"/>
</dbReference>
<dbReference type="EMBL" id="AF029315">
    <property type="protein sequence ID" value="AAB96907.1"/>
    <property type="status" value="JOINED"/>
    <property type="molecule type" value="Genomic_DNA"/>
</dbReference>
<dbReference type="EMBL" id="AF029316">
    <property type="protein sequence ID" value="AAB96908.1"/>
    <property type="molecule type" value="Genomic_DNA"/>
</dbReference>
<dbReference type="EMBL" id="AF029313">
    <property type="protein sequence ID" value="AAB96908.1"/>
    <property type="status" value="JOINED"/>
    <property type="molecule type" value="Genomic_DNA"/>
</dbReference>
<dbReference type="EMBL" id="AF029314">
    <property type="protein sequence ID" value="AAB96908.1"/>
    <property type="status" value="JOINED"/>
    <property type="molecule type" value="Genomic_DNA"/>
</dbReference>
<dbReference type="EMBL" id="AF029315">
    <property type="protein sequence ID" value="AAB96908.1"/>
    <property type="status" value="JOINED"/>
    <property type="molecule type" value="Genomic_DNA"/>
</dbReference>
<dbReference type="EMBL" id="U62390">
    <property type="protein sequence ID" value="AAC39539.1"/>
    <property type="molecule type" value="mRNA"/>
</dbReference>
<dbReference type="EMBL" id="AF027515">
    <property type="protein sequence ID" value="AAC39541.1"/>
    <property type="molecule type" value="mRNA"/>
</dbReference>
<dbReference type="EMBL" id="AF027516">
    <property type="protein sequence ID" value="AAC39542.1"/>
    <property type="molecule type" value="mRNA"/>
</dbReference>
<dbReference type="EMBL" id="X94333">
    <property type="protein sequence ID" value="CAA64002.1"/>
    <property type="molecule type" value="mRNA"/>
</dbReference>
<dbReference type="EMBL" id="AK126465">
    <property type="protein sequence ID" value="BAC86559.1"/>
    <property type="molecule type" value="mRNA"/>
</dbReference>
<dbReference type="EMBL" id="AK222829">
    <property type="protein sequence ID" value="BAD96549.1"/>
    <property type="molecule type" value="mRNA"/>
</dbReference>
<dbReference type="EMBL" id="AK223063">
    <property type="protein sequence ID" value="BAD96783.1"/>
    <property type="molecule type" value="mRNA"/>
</dbReference>
<dbReference type="EMBL" id="AK312479">
    <property type="protein sequence ID" value="BAG35383.1"/>
    <property type="molecule type" value="mRNA"/>
</dbReference>
<dbReference type="EMBL" id="BX640868">
    <property type="protein sequence ID" value="CAE45926.1"/>
    <property type="molecule type" value="mRNA"/>
</dbReference>
<dbReference type="EMBL" id="AC093162">
    <property type="protein sequence ID" value="AAY24095.1"/>
    <property type="molecule type" value="Genomic_DNA"/>
</dbReference>
<dbReference type="EMBL" id="CH471053">
    <property type="protein sequence ID" value="EAW99535.1"/>
    <property type="molecule type" value="Genomic_DNA"/>
</dbReference>
<dbReference type="EMBL" id="CH471053">
    <property type="protein sequence ID" value="EAW99536.1"/>
    <property type="molecule type" value="Genomic_DNA"/>
</dbReference>
<dbReference type="EMBL" id="CH471053">
    <property type="protein sequence ID" value="EAW99539.1"/>
    <property type="molecule type" value="Genomic_DNA"/>
</dbReference>
<dbReference type="EMBL" id="BC008461">
    <property type="protein sequence ID" value="AAH08461.1"/>
    <property type="molecule type" value="mRNA"/>
</dbReference>
<dbReference type="EMBL" id="BC028219">
    <property type="protein sequence ID" value="AAH28219.1"/>
    <property type="molecule type" value="mRNA"/>
</dbReference>
<dbReference type="CCDS" id="CCDS46351.1">
    <molecule id="O43493-2"/>
</dbReference>
<dbReference type="CCDS" id="CCDS56127.1">
    <molecule id="O43493-4"/>
</dbReference>
<dbReference type="CCDS" id="CCDS92789.1">
    <molecule id="O43493-7"/>
</dbReference>
<dbReference type="RefSeq" id="NP_001193769.1">
    <property type="nucleotide sequence ID" value="NM_001206840.1"/>
</dbReference>
<dbReference type="RefSeq" id="NP_001193770.1">
    <property type="nucleotide sequence ID" value="NM_001206841.1"/>
</dbReference>
<dbReference type="RefSeq" id="NP_001193773.1">
    <molecule id="O43493-4"/>
    <property type="nucleotide sequence ID" value="NM_001206844.2"/>
</dbReference>
<dbReference type="RefSeq" id="NP_001355024.1">
    <molecule id="O43493-7"/>
    <property type="nucleotide sequence ID" value="NM_001368095.1"/>
</dbReference>
<dbReference type="RefSeq" id="NP_006455.2">
    <molecule id="O43493-2"/>
    <property type="nucleotide sequence ID" value="NM_006464.3"/>
</dbReference>
<dbReference type="PDB" id="6YAF">
    <property type="method" value="EM"/>
    <property type="resolution" value="9.10 A"/>
    <property type="chains" value="P=420-434"/>
</dbReference>
<dbReference type="PDBsum" id="6YAF"/>
<dbReference type="SMR" id="O43493"/>
<dbReference type="BioGRID" id="115864">
    <property type="interactions" value="1592"/>
</dbReference>
<dbReference type="FunCoup" id="O43493">
    <property type="interactions" value="210"/>
</dbReference>
<dbReference type="IntAct" id="O43493">
    <property type="interactions" value="464"/>
</dbReference>
<dbReference type="MINT" id="O43493"/>
<dbReference type="STRING" id="9606.ENSP00000386443"/>
<dbReference type="GlyConnect" id="2945">
    <property type="glycosylation" value="3 N-Linked glycans (1 site)"/>
</dbReference>
<dbReference type="GlyCosmos" id="O43493">
    <property type="glycosylation" value="13 sites, 7 glycans"/>
</dbReference>
<dbReference type="GlyGen" id="O43493">
    <property type="glycosylation" value="41 sites, 8 N-linked glycans (2 sites), 3 O-linked glycans (32 sites)"/>
</dbReference>
<dbReference type="iPTMnet" id="O43493"/>
<dbReference type="PhosphoSitePlus" id="O43493"/>
<dbReference type="SwissPalm" id="O43493"/>
<dbReference type="BioMuta" id="TGOLN2"/>
<dbReference type="jPOST" id="O43493"/>
<dbReference type="MassIVE" id="O43493"/>
<dbReference type="PaxDb" id="9606-ENSP00000386443"/>
<dbReference type="PeptideAtlas" id="O43493"/>
<dbReference type="ProteomicsDB" id="30219"/>
<dbReference type="ProteomicsDB" id="30837"/>
<dbReference type="ProteomicsDB" id="48977">
    <molecule id="O43493-2"/>
</dbReference>
<dbReference type="ProteomicsDB" id="48978">
    <molecule id="O43493-3"/>
</dbReference>
<dbReference type="ProteomicsDB" id="48979">
    <molecule id="O43493-4"/>
</dbReference>
<dbReference type="ProteomicsDB" id="48980">
    <molecule id="O43493-5"/>
</dbReference>
<dbReference type="ProteomicsDB" id="48981">
    <molecule id="O43493-6"/>
</dbReference>
<dbReference type="Pumba" id="O43493"/>
<dbReference type="Antibodypedia" id="2516">
    <property type="antibodies" value="348 antibodies from 33 providers"/>
</dbReference>
<dbReference type="DNASU" id="10618"/>
<dbReference type="Ensembl" id="ENST00000377386.8">
    <molecule id="O43493-2"/>
    <property type="protein sequence ID" value="ENSP00000366603.3"/>
    <property type="gene ID" value="ENSG00000152291.15"/>
</dbReference>
<dbReference type="Ensembl" id="ENST00000398263.6">
    <molecule id="O43493-4"/>
    <property type="protein sequence ID" value="ENSP00000381312.2"/>
    <property type="gene ID" value="ENSG00000152291.15"/>
</dbReference>
<dbReference type="Ensembl" id="ENST00000409015.5">
    <molecule id="O43493-7"/>
    <property type="protein sequence ID" value="ENSP00000387035.1"/>
    <property type="gene ID" value="ENSG00000152291.15"/>
</dbReference>
<dbReference type="Ensembl" id="ENST00000444342.2">
    <molecule id="O43493-5"/>
    <property type="protein sequence ID" value="ENSP00000391190.2"/>
    <property type="gene ID" value="ENSG00000152291.15"/>
</dbReference>
<dbReference type="Ensembl" id="ENST00000710332.1">
    <molecule id="O43493-4"/>
    <property type="protein sequence ID" value="ENSP00000518212.1"/>
    <property type="gene ID" value="ENSG00000292253.1"/>
</dbReference>
<dbReference type="GeneID" id="10618"/>
<dbReference type="KEGG" id="hsa:10618"/>
<dbReference type="MANE-Select" id="ENST00000377386.8">
    <property type="protein sequence ID" value="ENSP00000366603.3"/>
    <property type="RefSeq nucleotide sequence ID" value="NM_006464.4"/>
    <property type="RefSeq protein sequence ID" value="NP_006455.2"/>
</dbReference>
<dbReference type="UCSC" id="uc002soz.4">
    <molecule id="O43493-2"/>
    <property type="organism name" value="human"/>
</dbReference>
<dbReference type="UCSC" id="uc021vjw.2">
    <property type="organism name" value="human"/>
</dbReference>
<dbReference type="AGR" id="HGNC:15450"/>
<dbReference type="CTD" id="10618"/>
<dbReference type="DisGeNET" id="10618"/>
<dbReference type="GeneCards" id="TGOLN2"/>
<dbReference type="HGNC" id="HGNC:15450">
    <property type="gene designation" value="TGOLN2"/>
</dbReference>
<dbReference type="HPA" id="ENSG00000152291">
    <property type="expression patterns" value="Low tissue specificity"/>
</dbReference>
<dbReference type="MIM" id="603062">
    <property type="type" value="gene"/>
</dbReference>
<dbReference type="neXtProt" id="NX_O43493"/>
<dbReference type="OpenTargets" id="ENSG00000152291"/>
<dbReference type="PharmGKB" id="PA37959"/>
<dbReference type="VEuPathDB" id="HostDB:ENSG00000152291"/>
<dbReference type="eggNOG" id="ENOG502S6YU">
    <property type="taxonomic scope" value="Eukaryota"/>
</dbReference>
<dbReference type="GeneTree" id="ENSGT00530000064712"/>
<dbReference type="HOGENOM" id="CLU_047350_0_0_1"/>
<dbReference type="InParanoid" id="O43493"/>
<dbReference type="OMA" id="WIPSHSP"/>
<dbReference type="OrthoDB" id="5846619at2759"/>
<dbReference type="PAN-GO" id="O43493">
    <property type="GO annotations" value="3 GO annotations based on evolutionary models"/>
</dbReference>
<dbReference type="PhylomeDB" id="O43493"/>
<dbReference type="TreeFam" id="TF332514"/>
<dbReference type="PathwayCommons" id="O43493"/>
<dbReference type="Reactome" id="R-HSA-381426">
    <property type="pathway name" value="Regulation of Insulin-like Growth Factor (IGF) transport and uptake by Insulin-like Growth Factor Binding Proteins (IGFBPs)"/>
</dbReference>
<dbReference type="Reactome" id="R-HSA-432722">
    <property type="pathway name" value="Golgi Associated Vesicle Biogenesis"/>
</dbReference>
<dbReference type="Reactome" id="R-HSA-6811440">
    <property type="pathway name" value="Retrograde transport at the Trans-Golgi-Network"/>
</dbReference>
<dbReference type="Reactome" id="R-HSA-8856825">
    <property type="pathway name" value="Cargo recognition for clathrin-mediated endocytosis"/>
</dbReference>
<dbReference type="Reactome" id="R-HSA-8856828">
    <property type="pathway name" value="Clathrin-mediated endocytosis"/>
</dbReference>
<dbReference type="Reactome" id="R-HSA-8957275">
    <property type="pathway name" value="Post-translational protein phosphorylation"/>
</dbReference>
<dbReference type="SignaLink" id="O43493"/>
<dbReference type="BioGRID-ORCS" id="10618">
    <property type="hits" value="8 hits in 1159 CRISPR screens"/>
</dbReference>
<dbReference type="ChiTaRS" id="TGOLN2">
    <property type="organism name" value="human"/>
</dbReference>
<dbReference type="GeneWiki" id="TGOLN2"/>
<dbReference type="GenomeRNAi" id="10618"/>
<dbReference type="Pharos" id="O43493">
    <property type="development level" value="Tbio"/>
</dbReference>
<dbReference type="PRO" id="PR:O43493"/>
<dbReference type="Proteomes" id="UP000005640">
    <property type="component" value="Chromosome 2"/>
</dbReference>
<dbReference type="RNAct" id="O43493">
    <property type="molecule type" value="protein"/>
</dbReference>
<dbReference type="Bgee" id="ENSG00000152291">
    <property type="expression patterns" value="Expressed in renal medulla and 213 other cell types or tissues"/>
</dbReference>
<dbReference type="ExpressionAtlas" id="O43493">
    <property type="expression patterns" value="baseline and differential"/>
</dbReference>
<dbReference type="GO" id="GO:0030669">
    <property type="term" value="C:clathrin-coated endocytic vesicle membrane"/>
    <property type="evidence" value="ECO:0000304"/>
    <property type="project" value="Reactome"/>
</dbReference>
<dbReference type="GO" id="GO:0005788">
    <property type="term" value="C:endoplasmic reticulum lumen"/>
    <property type="evidence" value="ECO:0000304"/>
    <property type="project" value="Reactome"/>
</dbReference>
<dbReference type="GO" id="GO:0005768">
    <property type="term" value="C:endosome"/>
    <property type="evidence" value="ECO:0000318"/>
    <property type="project" value="GO_Central"/>
</dbReference>
<dbReference type="GO" id="GO:0005794">
    <property type="term" value="C:Golgi apparatus"/>
    <property type="evidence" value="ECO:0000314"/>
    <property type="project" value="HPA"/>
</dbReference>
<dbReference type="GO" id="GO:0005654">
    <property type="term" value="C:nucleoplasm"/>
    <property type="evidence" value="ECO:0000314"/>
    <property type="project" value="HPA"/>
</dbReference>
<dbReference type="GO" id="GO:0005886">
    <property type="term" value="C:plasma membrane"/>
    <property type="evidence" value="ECO:0000304"/>
    <property type="project" value="Reactome"/>
</dbReference>
<dbReference type="GO" id="GO:0005802">
    <property type="term" value="C:trans-Golgi network"/>
    <property type="evidence" value="ECO:0000314"/>
    <property type="project" value="MGI"/>
</dbReference>
<dbReference type="GO" id="GO:0030140">
    <property type="term" value="C:trans-Golgi network transport vesicle"/>
    <property type="evidence" value="ECO:0000318"/>
    <property type="project" value="GO_Central"/>
</dbReference>
<dbReference type="GO" id="GO:0030133">
    <property type="term" value="C:transport vesicle"/>
    <property type="evidence" value="ECO:0000304"/>
    <property type="project" value="ProtInc"/>
</dbReference>
<dbReference type="PANTHER" id="PTHR23211:SF0">
    <property type="entry name" value="TRANS-GOLGI NETWORK INTEGRAL MEMBRANE PROTEIN 2"/>
    <property type="match status" value="1"/>
</dbReference>
<dbReference type="PANTHER" id="PTHR23211">
    <property type="entry name" value="TRANS-GOLGI NETWORK INTEGRAL MEMBRANE PROTEIN TGN38"/>
    <property type="match status" value="1"/>
</dbReference>
<dbReference type="Pfam" id="PF17818">
    <property type="entry name" value="KCT2"/>
    <property type="match status" value="1"/>
</dbReference>
<gene>
    <name evidence="12" type="primary">TGOLN2</name>
    <name type="synonym">TGN46</name>
    <name type="synonym">TGN51</name>
</gene>
<name>TGON2_HUMAN</name>
<reference key="1">
    <citation type="journal article" date="1998" name="J. Biol. Chem.">
        <title>Molecular cloning and expression of a novel human trans-Golgi network glycoprotein, TGN51, that contains multiple tyrosine-containing motifs.</title>
        <authorList>
            <person name="Kain R."/>
            <person name="Angata K."/>
            <person name="Kerjaschki D."/>
            <person name="Fukuda M."/>
        </authorList>
    </citation>
    <scope>NUCLEOTIDE SEQUENCE [GENOMIC DNA / MRNA] (ISOFORMS TGN46 AND TGN48)</scope>
    <scope>MUTAGENESIS OF TYR-430</scope>
    <scope>VARIANTS VAL-10; GLY-86; LEU-91; GLN-103; PRO-105 AND GLY-322</scope>
    <source>
        <tissue>Liver</tissue>
        <tissue>Placenta</tissue>
    </source>
</reference>
<reference key="2">
    <citation type="journal article" date="1996" name="J. Cell Sci.">
        <title>Primate homologues of rat TGN38: primary structure, expression and functional implications.</title>
        <authorList>
            <person name="Ponnambalam S."/>
            <person name="Girotti M."/>
            <person name="Yaspo M.-L."/>
            <person name="Owen C.E."/>
            <person name="Perry A.C."/>
            <person name="Suganuma T."/>
            <person name="Nilsson T."/>
            <person name="Fried M."/>
            <person name="Banting G."/>
            <person name="Warren G."/>
        </authorList>
    </citation>
    <scope>NUCLEOTIDE SEQUENCE [MRNA] (ISOFORM TGN46)</scope>
    <scope>VARIANT TRP-259</scope>
    <source>
        <tissue>Fetal liver</tissue>
        <tissue>Fetal thymus</tissue>
    </source>
</reference>
<reference key="3">
    <citation type="journal article" date="2004" name="Nat. Genet.">
        <title>Complete sequencing and characterization of 21,243 full-length human cDNAs.</title>
        <authorList>
            <person name="Ota T."/>
            <person name="Suzuki Y."/>
            <person name="Nishikawa T."/>
            <person name="Otsuki T."/>
            <person name="Sugiyama T."/>
            <person name="Irie R."/>
            <person name="Wakamatsu A."/>
            <person name="Hayashi K."/>
            <person name="Sato H."/>
            <person name="Nagai K."/>
            <person name="Kimura K."/>
            <person name="Makita H."/>
            <person name="Sekine M."/>
            <person name="Obayashi M."/>
            <person name="Nishi T."/>
            <person name="Shibahara T."/>
            <person name="Tanaka T."/>
            <person name="Ishii S."/>
            <person name="Yamamoto J."/>
            <person name="Saito K."/>
            <person name="Kawai Y."/>
            <person name="Isono Y."/>
            <person name="Nakamura Y."/>
            <person name="Nagahari K."/>
            <person name="Murakami K."/>
            <person name="Yasuda T."/>
            <person name="Iwayanagi T."/>
            <person name="Wagatsuma M."/>
            <person name="Shiratori A."/>
            <person name="Sudo H."/>
            <person name="Hosoiri T."/>
            <person name="Kaku Y."/>
            <person name="Kodaira H."/>
            <person name="Kondo H."/>
            <person name="Sugawara M."/>
            <person name="Takahashi M."/>
            <person name="Kanda K."/>
            <person name="Yokoi T."/>
            <person name="Furuya T."/>
            <person name="Kikkawa E."/>
            <person name="Omura Y."/>
            <person name="Abe K."/>
            <person name="Kamihara K."/>
            <person name="Katsuta N."/>
            <person name="Sato K."/>
            <person name="Tanikawa M."/>
            <person name="Yamazaki M."/>
            <person name="Ninomiya K."/>
            <person name="Ishibashi T."/>
            <person name="Yamashita H."/>
            <person name="Murakawa K."/>
            <person name="Fujimori K."/>
            <person name="Tanai H."/>
            <person name="Kimata M."/>
            <person name="Watanabe M."/>
            <person name="Hiraoka S."/>
            <person name="Chiba Y."/>
            <person name="Ishida S."/>
            <person name="Ono Y."/>
            <person name="Takiguchi S."/>
            <person name="Watanabe S."/>
            <person name="Yosida M."/>
            <person name="Hotuta T."/>
            <person name="Kusano J."/>
            <person name="Kanehori K."/>
            <person name="Takahashi-Fujii A."/>
            <person name="Hara H."/>
            <person name="Tanase T.-O."/>
            <person name="Nomura Y."/>
            <person name="Togiya S."/>
            <person name="Komai F."/>
            <person name="Hara R."/>
            <person name="Takeuchi K."/>
            <person name="Arita M."/>
            <person name="Imose N."/>
            <person name="Musashino K."/>
            <person name="Yuuki H."/>
            <person name="Oshima A."/>
            <person name="Sasaki N."/>
            <person name="Aotsuka S."/>
            <person name="Yoshikawa Y."/>
            <person name="Matsunawa H."/>
            <person name="Ichihara T."/>
            <person name="Shiohata N."/>
            <person name="Sano S."/>
            <person name="Moriya S."/>
            <person name="Momiyama H."/>
            <person name="Satoh N."/>
            <person name="Takami S."/>
            <person name="Terashima Y."/>
            <person name="Suzuki O."/>
            <person name="Nakagawa S."/>
            <person name="Senoh A."/>
            <person name="Mizoguchi H."/>
            <person name="Goto Y."/>
            <person name="Shimizu F."/>
            <person name="Wakebe H."/>
            <person name="Hishigaki H."/>
            <person name="Watanabe T."/>
            <person name="Sugiyama A."/>
            <person name="Takemoto M."/>
            <person name="Kawakami B."/>
            <person name="Yamazaki M."/>
            <person name="Watanabe K."/>
            <person name="Kumagai A."/>
            <person name="Itakura S."/>
            <person name="Fukuzumi Y."/>
            <person name="Fujimori Y."/>
            <person name="Komiyama M."/>
            <person name="Tashiro H."/>
            <person name="Tanigami A."/>
            <person name="Fujiwara T."/>
            <person name="Ono T."/>
            <person name="Yamada K."/>
            <person name="Fujii Y."/>
            <person name="Ozaki K."/>
            <person name="Hirao M."/>
            <person name="Ohmori Y."/>
            <person name="Kawabata A."/>
            <person name="Hikiji T."/>
            <person name="Kobatake N."/>
            <person name="Inagaki H."/>
            <person name="Ikema Y."/>
            <person name="Okamoto S."/>
            <person name="Okitani R."/>
            <person name="Kawakami T."/>
            <person name="Noguchi S."/>
            <person name="Itoh T."/>
            <person name="Shigeta K."/>
            <person name="Senba T."/>
            <person name="Matsumura K."/>
            <person name="Nakajima Y."/>
            <person name="Mizuno T."/>
            <person name="Morinaga M."/>
            <person name="Sasaki M."/>
            <person name="Togashi T."/>
            <person name="Oyama M."/>
            <person name="Hata H."/>
            <person name="Watanabe M."/>
            <person name="Komatsu T."/>
            <person name="Mizushima-Sugano J."/>
            <person name="Satoh T."/>
            <person name="Shirai Y."/>
            <person name="Takahashi Y."/>
            <person name="Nakagawa K."/>
            <person name="Okumura K."/>
            <person name="Nagase T."/>
            <person name="Nomura N."/>
            <person name="Kikuchi H."/>
            <person name="Masuho Y."/>
            <person name="Yamashita R."/>
            <person name="Nakai K."/>
            <person name="Yada T."/>
            <person name="Nakamura Y."/>
            <person name="Ohara O."/>
            <person name="Isogai T."/>
            <person name="Sugano S."/>
        </authorList>
    </citation>
    <scope>NUCLEOTIDE SEQUENCE [LARGE SCALE MRNA] (ISOFORMS TGN46 AND 6)</scope>
    <scope>VARIANT TRP-259</scope>
    <source>
        <tissue>Uterus</tissue>
    </source>
</reference>
<reference key="4">
    <citation type="submission" date="2005-04" db="EMBL/GenBank/DDBJ databases">
        <authorList>
            <person name="Suzuki Y."/>
            <person name="Sugano S."/>
            <person name="Totoki Y."/>
            <person name="Toyoda A."/>
            <person name="Takeda T."/>
            <person name="Sakaki Y."/>
            <person name="Tanaka A."/>
            <person name="Yokoyama S."/>
        </authorList>
    </citation>
    <scope>NUCLEOTIDE SEQUENCE [LARGE SCALE MRNA] (ISOFORM TGN46)</scope>
    <scope>VARIANT TRP-259</scope>
    <source>
        <tissue>Liver</tissue>
    </source>
</reference>
<reference key="5">
    <citation type="journal article" date="2007" name="BMC Genomics">
        <title>The full-ORF clone resource of the German cDNA consortium.</title>
        <authorList>
            <person name="Bechtel S."/>
            <person name="Rosenfelder H."/>
            <person name="Duda A."/>
            <person name="Schmidt C.P."/>
            <person name="Ernst U."/>
            <person name="Wellenreuther R."/>
            <person name="Mehrle A."/>
            <person name="Schuster C."/>
            <person name="Bahr A."/>
            <person name="Bloecker H."/>
            <person name="Heubner D."/>
            <person name="Hoerlein A."/>
            <person name="Michel G."/>
            <person name="Wedler H."/>
            <person name="Koehrer K."/>
            <person name="Ottenwaelder B."/>
            <person name="Poustka A."/>
            <person name="Wiemann S."/>
            <person name="Schupp I."/>
        </authorList>
    </citation>
    <scope>NUCLEOTIDE SEQUENCE [LARGE SCALE MRNA] (ISOFORM 4)</scope>
    <source>
        <tissue>Cervix</tissue>
    </source>
</reference>
<reference key="6">
    <citation type="journal article" date="2005" name="Nature">
        <title>Generation and annotation of the DNA sequences of human chromosomes 2 and 4.</title>
        <authorList>
            <person name="Hillier L.W."/>
            <person name="Graves T.A."/>
            <person name="Fulton R.S."/>
            <person name="Fulton L.A."/>
            <person name="Pepin K.H."/>
            <person name="Minx P."/>
            <person name="Wagner-McPherson C."/>
            <person name="Layman D."/>
            <person name="Wylie K."/>
            <person name="Sekhon M."/>
            <person name="Becker M.C."/>
            <person name="Fewell G.A."/>
            <person name="Delehaunty K.D."/>
            <person name="Miner T.L."/>
            <person name="Nash W.E."/>
            <person name="Kremitzki C."/>
            <person name="Oddy L."/>
            <person name="Du H."/>
            <person name="Sun H."/>
            <person name="Bradshaw-Cordum H."/>
            <person name="Ali J."/>
            <person name="Carter J."/>
            <person name="Cordes M."/>
            <person name="Harris A."/>
            <person name="Isak A."/>
            <person name="van Brunt A."/>
            <person name="Nguyen C."/>
            <person name="Du F."/>
            <person name="Courtney L."/>
            <person name="Kalicki J."/>
            <person name="Ozersky P."/>
            <person name="Abbott S."/>
            <person name="Armstrong J."/>
            <person name="Belter E.A."/>
            <person name="Caruso L."/>
            <person name="Cedroni M."/>
            <person name="Cotton M."/>
            <person name="Davidson T."/>
            <person name="Desai A."/>
            <person name="Elliott G."/>
            <person name="Erb T."/>
            <person name="Fronick C."/>
            <person name="Gaige T."/>
            <person name="Haakenson W."/>
            <person name="Haglund K."/>
            <person name="Holmes A."/>
            <person name="Harkins R."/>
            <person name="Kim K."/>
            <person name="Kruchowski S.S."/>
            <person name="Strong C.M."/>
            <person name="Grewal N."/>
            <person name="Goyea E."/>
            <person name="Hou S."/>
            <person name="Levy A."/>
            <person name="Martinka S."/>
            <person name="Mead K."/>
            <person name="McLellan M.D."/>
            <person name="Meyer R."/>
            <person name="Randall-Maher J."/>
            <person name="Tomlinson C."/>
            <person name="Dauphin-Kohlberg S."/>
            <person name="Kozlowicz-Reilly A."/>
            <person name="Shah N."/>
            <person name="Swearengen-Shahid S."/>
            <person name="Snider J."/>
            <person name="Strong J.T."/>
            <person name="Thompson J."/>
            <person name="Yoakum M."/>
            <person name="Leonard S."/>
            <person name="Pearman C."/>
            <person name="Trani L."/>
            <person name="Radionenko M."/>
            <person name="Waligorski J.E."/>
            <person name="Wang C."/>
            <person name="Rock S.M."/>
            <person name="Tin-Wollam A.-M."/>
            <person name="Maupin R."/>
            <person name="Latreille P."/>
            <person name="Wendl M.C."/>
            <person name="Yang S.-P."/>
            <person name="Pohl C."/>
            <person name="Wallis J.W."/>
            <person name="Spieth J."/>
            <person name="Bieri T.A."/>
            <person name="Berkowicz N."/>
            <person name="Nelson J.O."/>
            <person name="Osborne J."/>
            <person name="Ding L."/>
            <person name="Meyer R."/>
            <person name="Sabo A."/>
            <person name="Shotland Y."/>
            <person name="Sinha P."/>
            <person name="Wohldmann P.E."/>
            <person name="Cook L.L."/>
            <person name="Hickenbotham M.T."/>
            <person name="Eldred J."/>
            <person name="Williams D."/>
            <person name="Jones T.A."/>
            <person name="She X."/>
            <person name="Ciccarelli F.D."/>
            <person name="Izaurralde E."/>
            <person name="Taylor J."/>
            <person name="Schmutz J."/>
            <person name="Myers R.M."/>
            <person name="Cox D.R."/>
            <person name="Huang X."/>
            <person name="McPherson J.D."/>
            <person name="Mardis E.R."/>
            <person name="Clifton S.W."/>
            <person name="Warren W.C."/>
            <person name="Chinwalla A.T."/>
            <person name="Eddy S.R."/>
            <person name="Marra M.A."/>
            <person name="Ovcharenko I."/>
            <person name="Furey T.S."/>
            <person name="Miller W."/>
            <person name="Eichler E.E."/>
            <person name="Bork P."/>
            <person name="Suyama M."/>
            <person name="Torrents D."/>
            <person name="Waterston R.H."/>
            <person name="Wilson R.K."/>
        </authorList>
    </citation>
    <scope>NUCLEOTIDE SEQUENCE [LARGE SCALE GENOMIC DNA]</scope>
</reference>
<reference key="7">
    <citation type="submission" date="2005-09" db="EMBL/GenBank/DDBJ databases">
        <authorList>
            <person name="Mural R.J."/>
            <person name="Istrail S."/>
            <person name="Sutton G.G."/>
            <person name="Florea L."/>
            <person name="Halpern A.L."/>
            <person name="Mobarry C.M."/>
            <person name="Lippert R."/>
            <person name="Walenz B."/>
            <person name="Shatkay H."/>
            <person name="Dew I."/>
            <person name="Miller J.R."/>
            <person name="Flanigan M.J."/>
            <person name="Edwards N.J."/>
            <person name="Bolanos R."/>
            <person name="Fasulo D."/>
            <person name="Halldorsson B.V."/>
            <person name="Hannenhalli S."/>
            <person name="Turner R."/>
            <person name="Yooseph S."/>
            <person name="Lu F."/>
            <person name="Nusskern D.R."/>
            <person name="Shue B.C."/>
            <person name="Zheng X.H."/>
            <person name="Zhong F."/>
            <person name="Delcher A.L."/>
            <person name="Huson D.H."/>
            <person name="Kravitz S.A."/>
            <person name="Mouchard L."/>
            <person name="Reinert K."/>
            <person name="Remington K.A."/>
            <person name="Clark A.G."/>
            <person name="Waterman M.S."/>
            <person name="Eichler E.E."/>
            <person name="Adams M.D."/>
            <person name="Hunkapiller M.W."/>
            <person name="Myers E.W."/>
            <person name="Venter J.C."/>
        </authorList>
    </citation>
    <scope>NUCLEOTIDE SEQUENCE [LARGE SCALE GENOMIC DNA]</scope>
    <scope>VARIANT TRP-259</scope>
</reference>
<reference key="8">
    <citation type="journal article" date="2004" name="Genome Res.">
        <title>The status, quality, and expansion of the NIH full-length cDNA project: the Mammalian Gene Collection (MGC).</title>
        <authorList>
            <consortium name="The MGC Project Team"/>
        </authorList>
    </citation>
    <scope>NUCLEOTIDE SEQUENCE [LARGE SCALE MRNA] (ISOFORMS TGN46 AND 5)</scope>
    <source>
        <tissue>Prostate</tissue>
    </source>
</reference>
<reference key="9">
    <citation type="journal article" date="2008" name="Proc. Natl. Acad. Sci. U.S.A.">
        <title>A quantitative atlas of mitotic phosphorylation.</title>
        <authorList>
            <person name="Dephoure N."/>
            <person name="Zhou C."/>
            <person name="Villen J."/>
            <person name="Beausoleil S.A."/>
            <person name="Bakalarski C.E."/>
            <person name="Elledge S.J."/>
            <person name="Gygi S.P."/>
        </authorList>
    </citation>
    <scope>PHOSPHORYLATION [LARGE SCALE ANALYSIS] AT SER-71</scope>
    <scope>IDENTIFICATION BY MASS SPECTROMETRY [LARGE SCALE ANALYSIS]</scope>
    <source>
        <tissue>Cervix carcinoma</tissue>
    </source>
</reference>
<reference key="10">
    <citation type="journal article" date="2008" name="Proteomics">
        <title>Large-scale phosphoproteome analysis of human liver tissue by enrichment and fractionation of phosphopeptides with strong anion exchange chromatography.</title>
        <authorList>
            <person name="Han G."/>
            <person name="Ye M."/>
            <person name="Zhou H."/>
            <person name="Jiang X."/>
            <person name="Feng S."/>
            <person name="Jiang X."/>
            <person name="Tian R."/>
            <person name="Wan D."/>
            <person name="Zou H."/>
            <person name="Gu J."/>
        </authorList>
    </citation>
    <scope>IDENTIFICATION BY MASS SPECTROMETRY [LARGE SCALE ANALYSIS]</scope>
    <source>
        <tissue>Liver</tissue>
    </source>
</reference>
<reference key="11">
    <citation type="journal article" date="2010" name="Sci. Signal.">
        <title>Quantitative phosphoproteomics reveals widespread full phosphorylation site occupancy during mitosis.</title>
        <authorList>
            <person name="Olsen J.V."/>
            <person name="Vermeulen M."/>
            <person name="Santamaria A."/>
            <person name="Kumar C."/>
            <person name="Miller M.L."/>
            <person name="Jensen L.J."/>
            <person name="Gnad F."/>
            <person name="Cox J."/>
            <person name="Jensen T.S."/>
            <person name="Nigg E.A."/>
            <person name="Brunak S."/>
            <person name="Mann M."/>
        </authorList>
    </citation>
    <scope>IDENTIFICATION BY MASS SPECTROMETRY [LARGE SCALE ANALYSIS]</scope>
    <source>
        <tissue>Cervix carcinoma</tissue>
    </source>
</reference>
<reference key="12">
    <citation type="journal article" date="2011" name="BMC Syst. Biol.">
        <title>Initial characterization of the human central proteome.</title>
        <authorList>
            <person name="Burkard T.R."/>
            <person name="Planyavsky M."/>
            <person name="Kaupe I."/>
            <person name="Breitwieser F.P."/>
            <person name="Buerckstuemmer T."/>
            <person name="Bennett K.L."/>
            <person name="Superti-Furga G."/>
            <person name="Colinge J."/>
        </authorList>
    </citation>
    <scope>IDENTIFICATION BY MASS SPECTROMETRY [LARGE SCALE ANALYSIS]</scope>
</reference>
<reference key="13">
    <citation type="journal article" date="2011" name="Sci. Signal.">
        <title>System-wide temporal characterization of the proteome and phosphoproteome of human embryonic stem cell differentiation.</title>
        <authorList>
            <person name="Rigbolt K.T."/>
            <person name="Prokhorova T.A."/>
            <person name="Akimov V."/>
            <person name="Henningsen J."/>
            <person name="Johansen P.T."/>
            <person name="Kratchmarova I."/>
            <person name="Kassem M."/>
            <person name="Mann M."/>
            <person name="Olsen J.V."/>
            <person name="Blagoev B."/>
        </authorList>
    </citation>
    <scope>PHOSPHORYLATION [LARGE SCALE ANALYSIS] AT SER-71</scope>
    <scope>IDENTIFICATION BY MASS SPECTROMETRY [LARGE SCALE ANALYSIS]</scope>
</reference>
<reference key="14">
    <citation type="journal article" date="2013" name="J. Proteome Res.">
        <title>Toward a comprehensive characterization of a human cancer cell phosphoproteome.</title>
        <authorList>
            <person name="Zhou H."/>
            <person name="Di Palma S."/>
            <person name="Preisinger C."/>
            <person name="Peng M."/>
            <person name="Polat A.N."/>
            <person name="Heck A.J."/>
            <person name="Mohammed S."/>
        </authorList>
    </citation>
    <scope>PHOSPHORYLATION [LARGE SCALE ANALYSIS] AT SER-71 AND SER-298</scope>
    <scope>IDENTIFICATION BY MASS SPECTROMETRY [LARGE SCALE ANALYSIS]</scope>
    <source>
        <tissue>Cervix carcinoma</tissue>
    </source>
</reference>
<reference key="15">
    <citation type="journal article" date="2014" name="J. Proteomics">
        <title>An enzyme assisted RP-RPLC approach for in-depth analysis of human liver phosphoproteome.</title>
        <authorList>
            <person name="Bian Y."/>
            <person name="Song C."/>
            <person name="Cheng K."/>
            <person name="Dong M."/>
            <person name="Wang F."/>
            <person name="Huang J."/>
            <person name="Sun D."/>
            <person name="Wang L."/>
            <person name="Ye M."/>
            <person name="Zou H."/>
        </authorList>
    </citation>
    <scope>PHOSPHORYLATION [LARGE SCALE ANALYSIS] AT SER-71 AND SER-351</scope>
    <scope>IDENTIFICATION BY MASS SPECTROMETRY [LARGE SCALE ANALYSIS]</scope>
    <source>
        <tissue>Liver</tissue>
    </source>
</reference>
<reference key="16">
    <citation type="journal article" date="2015" name="Cell">
        <title>A single kinase generates the majority of the secreted phosphoproteome.</title>
        <authorList>
            <person name="Tagliabracci V.S."/>
            <person name="Wiley S.E."/>
            <person name="Guo X."/>
            <person name="Kinch L.N."/>
            <person name="Durrant E."/>
            <person name="Wen J."/>
            <person name="Xiao J."/>
            <person name="Cui J."/>
            <person name="Nguyen K.B."/>
            <person name="Engel J.L."/>
            <person name="Coon J.J."/>
            <person name="Grishin N."/>
            <person name="Pinna L.A."/>
            <person name="Pagliarini D.J."/>
            <person name="Dixon J.E."/>
        </authorList>
    </citation>
    <scope>PHOSPHORYLATION AT SER-71; SER-221; SER-298; THR-302 AND SER-351</scope>
</reference>
<reference key="17">
    <citation type="journal article" date="2015" name="Proteomics">
        <title>N-terminome analysis of the human mitochondrial proteome.</title>
        <authorList>
            <person name="Vaca Jacome A.S."/>
            <person name="Rabilloud T."/>
            <person name="Schaeffer-Reiss C."/>
            <person name="Rompais M."/>
            <person name="Ayoub D."/>
            <person name="Lane L."/>
            <person name="Bairoch A."/>
            <person name="Van Dorsselaer A."/>
            <person name="Carapito C."/>
        </authorList>
    </citation>
    <scope>IDENTIFICATION BY MASS SPECTROMETRY [LARGE SCALE ANALYSIS]</scope>
</reference>
<proteinExistence type="evidence at protein level"/>
<protein>
    <recommendedName>
        <fullName evidence="10">Trans-Golgi network integral membrane protein 2</fullName>
    </recommendedName>
    <alternativeName>
        <fullName evidence="9">Trans-Golgi network glycoprotein 46</fullName>
        <shortName evidence="11">TGN38 homolog</shortName>
        <shortName evidence="9">hTGN46</shortName>
    </alternativeName>
    <alternativeName>
        <fullName evidence="9">Trans-Golgi network glycoprotein 48</fullName>
        <shortName evidence="9">hTGN48</shortName>
    </alternativeName>
    <alternativeName>
        <fullName evidence="9">Trans-Golgi network glycoprotein 51</fullName>
        <shortName evidence="9">hTGN51</shortName>
    </alternativeName>
    <alternativeName>
        <fullName evidence="12">Trans-Golgi network protein 2</fullName>
    </alternativeName>
</protein>
<keyword id="KW-0002">3D-structure</keyword>
<keyword id="KW-0025">Alternative splicing</keyword>
<keyword id="KW-1003">Cell membrane</keyword>
<keyword id="KW-0325">Glycoprotein</keyword>
<keyword id="KW-0333">Golgi apparatus</keyword>
<keyword id="KW-0472">Membrane</keyword>
<keyword id="KW-0597">Phosphoprotein</keyword>
<keyword id="KW-1267">Proteomics identification</keyword>
<keyword id="KW-1185">Reference proteome</keyword>
<keyword id="KW-0677">Repeat</keyword>
<keyword id="KW-0732">Signal</keyword>
<keyword id="KW-0812">Transmembrane</keyword>
<keyword id="KW-1133">Transmembrane helix</keyword>
<organism>
    <name type="scientific">Homo sapiens</name>
    <name type="common">Human</name>
    <dbReference type="NCBI Taxonomy" id="9606"/>
    <lineage>
        <taxon>Eukaryota</taxon>
        <taxon>Metazoa</taxon>
        <taxon>Chordata</taxon>
        <taxon>Craniata</taxon>
        <taxon>Vertebrata</taxon>
        <taxon>Euteleostomi</taxon>
        <taxon>Mammalia</taxon>
        <taxon>Eutheria</taxon>
        <taxon>Euarchontoglires</taxon>
        <taxon>Primates</taxon>
        <taxon>Haplorrhini</taxon>
        <taxon>Catarrhini</taxon>
        <taxon>Hominidae</taxon>
        <taxon>Homo</taxon>
    </lineage>
</organism>
<comment type="function">
    <text>May be involved in regulating membrane traffic to and from trans-Golgi network.</text>
</comment>
<comment type="interaction">
    <interactant intactId="EBI-1752146">
        <id>O43493</id>
    </interactant>
    <interactant intactId="EBI-10172052">
        <id>P60411</id>
        <label>KRTAP10-9</label>
    </interactant>
    <organismsDiffer>false</organismsDiffer>
    <experiments>3</experiments>
</comment>
<comment type="interaction">
    <interactant intactId="EBI-1752146">
        <id>O43493</id>
    </interactant>
    <interactant intactId="EBI-389883">
        <id>P16333</id>
        <label>NCK1</label>
    </interactant>
    <organismsDiffer>false</organismsDiffer>
    <experiments>3</experiments>
</comment>
<comment type="interaction">
    <interactant intactId="EBI-25830716">
        <id>O43493-5</id>
    </interactant>
    <interactant intactId="EBI-751728">
        <id>P01019</id>
        <label>AGT</label>
    </interactant>
    <organismsDiffer>false</organismsDiffer>
    <experiments>3</experiments>
</comment>
<comment type="interaction">
    <interactant intactId="EBI-25830716">
        <id>O43493-5</id>
    </interactant>
    <interactant intactId="EBI-357407">
        <id>P78371</id>
        <label>CCT2</label>
    </interactant>
    <organismsDiffer>false</organismsDiffer>
    <experiments>3</experiments>
</comment>
<comment type="interaction">
    <interactant intactId="EBI-25830716">
        <id>O43493-5</id>
    </interactant>
    <interactant intactId="EBI-10087153">
        <id>P03952</id>
        <label>KLKB1</label>
    </interactant>
    <organismsDiffer>false</organismsDiffer>
    <experiments>3</experiments>
</comment>
<comment type="interaction">
    <interactant intactId="EBI-25830716">
        <id>O43493-5</id>
    </interactant>
    <interactant intactId="EBI-715909">
        <id>P06858</id>
        <label>LPL</label>
    </interactant>
    <organismsDiffer>false</organismsDiffer>
    <experiments>3</experiments>
</comment>
<comment type="interaction">
    <interactant intactId="EBI-25830716">
        <id>O43493-5</id>
    </interactant>
    <interactant intactId="EBI-12157263">
        <id>P40337-2</id>
        <label>VHL</label>
    </interactant>
    <organismsDiffer>false</organismsDiffer>
    <experiments>3</experiments>
</comment>
<comment type="subcellular location">
    <subcellularLocation>
        <location>Cell membrane</location>
        <topology>Single-pass type I membrane protein</topology>
    </subcellularLocation>
    <subcellularLocation>
        <location>Golgi apparatus</location>
        <location>trans-Golgi network membrane</location>
        <topology>Single-pass type I membrane protein</topology>
    </subcellularLocation>
    <text>Primarily in trans-Golgi network. Cycles between the trans-Golgi network and the cell surface returning via endosomes.</text>
</comment>
<comment type="alternative products">
    <event type="alternative splicing"/>
    <isoform>
        <id>O43493-2</id>
        <name>TGN46</name>
        <sequence type="displayed"/>
    </isoform>
    <isoform>
        <id>O43493-3</id>
        <name>TGN48</name>
        <sequence type="described" ref="VSP_060323"/>
    </isoform>
    <isoform>
        <id>O43493-4</id>
        <name>4</name>
        <sequence type="described" ref="VSP_060319"/>
    </isoform>
    <isoform>
        <id>O43493-5</id>
        <name>5</name>
        <sequence type="described" ref="VSP_060321"/>
    </isoform>
    <isoform>
        <id>O43493-6</id>
        <name>6</name>
        <sequence type="described" ref="VSP_060318 VSP_060320"/>
    </isoform>
    <isoform>
        <id>O43493-7</id>
        <name>7</name>
        <sequence type="described" ref="VSP_060322"/>
    </isoform>
</comment>
<comment type="tissue specificity">
    <text>Isoform TGN46 is widely expressed. Isoform TGN51 is more abundant in fetal lung and kidney. Isoform TGN48 is barely expressed in embryonic kidney and promyelocytic cells.</text>
</comment>
<sequence>MRFVVALVLLNVAAAGAVPLLATESVKQEEAGVRPSAGNVSTHPSLSQRPGGSTKSHPEPQTPKDSPSKSSAEAQTPEDTPNKSGAEAKTQKDSSNKSGAEAKTQKGSTSKSGSEAQTTKDSTSKSHPELQTPKDSTGKSGAEAQTPEDSPNRSGAEAKTQKDSPSKSGSEAQTTKDVPNKSGADGQTPKDGSSKSGAEDQTPKDVPNKSGAEKQTPKDGSNKSGAEEQGPIDGPSKSGAEEQTSKDSPNKVVPEQPSRKDHSKPISNPSDNKELPKADTNQLADKGKLSPHAFKTESGEETDLISPPQEEVKSSEPTEDVEPKEAEDDDTGPEEGSPPKEEKEKMSGSASSENREGTLSDSTGSEKDDLYPNGSGNGSAESSHFFAYLVTAAILVAVLYIAHHNKRKIIAFVLEGKRSKVTRRPKASDYQRLDQKS</sequence>
<evidence type="ECO:0000255" key="1"/>
<evidence type="ECO:0000256" key="2">
    <source>
        <dbReference type="SAM" id="MobiDB-lite"/>
    </source>
</evidence>
<evidence type="ECO:0000269" key="3">
    <source>
    </source>
</evidence>
<evidence type="ECO:0000269" key="4">
    <source>
    </source>
</evidence>
<evidence type="ECO:0000269" key="5">
    <source>
    </source>
</evidence>
<evidence type="ECO:0000269" key="6">
    <source>
    </source>
</evidence>
<evidence type="ECO:0000269" key="7">
    <source ref="4"/>
</evidence>
<evidence type="ECO:0000269" key="8">
    <source ref="7"/>
</evidence>
<evidence type="ECO:0000303" key="9">
    <source>
    </source>
</evidence>
<evidence type="ECO:0000305" key="10"/>
<evidence type="ECO:0000305" key="11">
    <source>
    </source>
</evidence>
<evidence type="ECO:0000312" key="12">
    <source>
        <dbReference type="HGNC" id="HGNC:15450"/>
    </source>
</evidence>
<evidence type="ECO:0007744" key="13">
    <source>
    </source>
</evidence>
<evidence type="ECO:0007744" key="14">
    <source>
    </source>
</evidence>
<evidence type="ECO:0007744" key="15">
    <source>
    </source>
</evidence>
<evidence type="ECO:0007744" key="16">
    <source>
    </source>
</evidence>